<reference key="1">
    <citation type="journal article" date="2004" name="Proc. Natl. Acad. Sci. U.S.A.">
        <title>The louse-borne human pathogen Bartonella quintana is a genomic derivative of the zoonotic agent Bartonella henselae.</title>
        <authorList>
            <person name="Alsmark U.C.M."/>
            <person name="Frank A.C."/>
            <person name="Karlberg E.O."/>
            <person name="Legault B.-A."/>
            <person name="Ardell D.H."/>
            <person name="Canbaeck B."/>
            <person name="Eriksson A.-S."/>
            <person name="Naeslund A.K."/>
            <person name="Handley S.A."/>
            <person name="Huvet M."/>
            <person name="La Scola B."/>
            <person name="Holmberg M."/>
            <person name="Andersson S.G.E."/>
        </authorList>
    </citation>
    <scope>NUCLEOTIDE SEQUENCE [LARGE SCALE GENOMIC DNA]</scope>
    <source>
        <strain>ATCC 49882 / DSM 28221 / CCUG 30454 / Houston 1</strain>
    </source>
</reference>
<accession>Q6G5R1</accession>
<protein>
    <recommendedName>
        <fullName evidence="1">Holliday junction branch migration complex subunit RuvB</fullName>
        <ecNumber evidence="1">3.6.4.-</ecNumber>
    </recommendedName>
</protein>
<dbReference type="EC" id="3.6.4.-" evidence="1"/>
<dbReference type="EMBL" id="BX897699">
    <property type="protein sequence ID" value="CAF28252.1"/>
    <property type="molecule type" value="Genomic_DNA"/>
</dbReference>
<dbReference type="RefSeq" id="WP_011181258.1">
    <property type="nucleotide sequence ID" value="NZ_LRIJ02000001.1"/>
</dbReference>
<dbReference type="SMR" id="Q6G5R1"/>
<dbReference type="PaxDb" id="283166-BH14890"/>
<dbReference type="EnsemblBacteria" id="CAF28252">
    <property type="protein sequence ID" value="CAF28252"/>
    <property type="gene ID" value="BH14890"/>
</dbReference>
<dbReference type="GeneID" id="92986102"/>
<dbReference type="KEGG" id="bhe:BH14890"/>
<dbReference type="eggNOG" id="COG2255">
    <property type="taxonomic scope" value="Bacteria"/>
</dbReference>
<dbReference type="OrthoDB" id="9804478at2"/>
<dbReference type="Proteomes" id="UP000000421">
    <property type="component" value="Chromosome"/>
</dbReference>
<dbReference type="GO" id="GO:0005737">
    <property type="term" value="C:cytoplasm"/>
    <property type="evidence" value="ECO:0007669"/>
    <property type="project" value="UniProtKB-SubCell"/>
</dbReference>
<dbReference type="GO" id="GO:0048476">
    <property type="term" value="C:Holliday junction resolvase complex"/>
    <property type="evidence" value="ECO:0007669"/>
    <property type="project" value="UniProtKB-UniRule"/>
</dbReference>
<dbReference type="GO" id="GO:0005524">
    <property type="term" value="F:ATP binding"/>
    <property type="evidence" value="ECO:0007669"/>
    <property type="project" value="UniProtKB-UniRule"/>
</dbReference>
<dbReference type="GO" id="GO:0016887">
    <property type="term" value="F:ATP hydrolysis activity"/>
    <property type="evidence" value="ECO:0007669"/>
    <property type="project" value="InterPro"/>
</dbReference>
<dbReference type="GO" id="GO:0000400">
    <property type="term" value="F:four-way junction DNA binding"/>
    <property type="evidence" value="ECO:0007669"/>
    <property type="project" value="UniProtKB-UniRule"/>
</dbReference>
<dbReference type="GO" id="GO:0009378">
    <property type="term" value="F:four-way junction helicase activity"/>
    <property type="evidence" value="ECO:0007669"/>
    <property type="project" value="InterPro"/>
</dbReference>
<dbReference type="GO" id="GO:0006310">
    <property type="term" value="P:DNA recombination"/>
    <property type="evidence" value="ECO:0007669"/>
    <property type="project" value="UniProtKB-UniRule"/>
</dbReference>
<dbReference type="GO" id="GO:0006281">
    <property type="term" value="P:DNA repair"/>
    <property type="evidence" value="ECO:0007669"/>
    <property type="project" value="UniProtKB-UniRule"/>
</dbReference>
<dbReference type="CDD" id="cd00009">
    <property type="entry name" value="AAA"/>
    <property type="match status" value="1"/>
</dbReference>
<dbReference type="Gene3D" id="1.10.8.60">
    <property type="match status" value="1"/>
</dbReference>
<dbReference type="Gene3D" id="3.40.50.300">
    <property type="entry name" value="P-loop containing nucleotide triphosphate hydrolases"/>
    <property type="match status" value="1"/>
</dbReference>
<dbReference type="Gene3D" id="1.10.10.10">
    <property type="entry name" value="Winged helix-like DNA-binding domain superfamily/Winged helix DNA-binding domain"/>
    <property type="match status" value="1"/>
</dbReference>
<dbReference type="HAMAP" id="MF_00016">
    <property type="entry name" value="DNA_HJ_migration_RuvB"/>
    <property type="match status" value="1"/>
</dbReference>
<dbReference type="InterPro" id="IPR003593">
    <property type="entry name" value="AAA+_ATPase"/>
</dbReference>
<dbReference type="InterPro" id="IPR041445">
    <property type="entry name" value="AAA_lid_4"/>
</dbReference>
<dbReference type="InterPro" id="IPR004605">
    <property type="entry name" value="DNA_helicase_Holl-junc_RuvB"/>
</dbReference>
<dbReference type="InterPro" id="IPR027417">
    <property type="entry name" value="P-loop_NTPase"/>
</dbReference>
<dbReference type="InterPro" id="IPR008824">
    <property type="entry name" value="RuvB-like_N"/>
</dbReference>
<dbReference type="InterPro" id="IPR008823">
    <property type="entry name" value="RuvB_C"/>
</dbReference>
<dbReference type="InterPro" id="IPR036388">
    <property type="entry name" value="WH-like_DNA-bd_sf"/>
</dbReference>
<dbReference type="InterPro" id="IPR036390">
    <property type="entry name" value="WH_DNA-bd_sf"/>
</dbReference>
<dbReference type="NCBIfam" id="NF000868">
    <property type="entry name" value="PRK00080.1"/>
    <property type="match status" value="1"/>
</dbReference>
<dbReference type="NCBIfam" id="TIGR00635">
    <property type="entry name" value="ruvB"/>
    <property type="match status" value="1"/>
</dbReference>
<dbReference type="PANTHER" id="PTHR42848">
    <property type="match status" value="1"/>
</dbReference>
<dbReference type="PANTHER" id="PTHR42848:SF1">
    <property type="entry name" value="HOLLIDAY JUNCTION BRANCH MIGRATION COMPLEX SUBUNIT RUVB"/>
    <property type="match status" value="1"/>
</dbReference>
<dbReference type="Pfam" id="PF17864">
    <property type="entry name" value="AAA_lid_4"/>
    <property type="match status" value="1"/>
</dbReference>
<dbReference type="Pfam" id="PF05491">
    <property type="entry name" value="RuvB_C"/>
    <property type="match status" value="1"/>
</dbReference>
<dbReference type="Pfam" id="PF05496">
    <property type="entry name" value="RuvB_N"/>
    <property type="match status" value="1"/>
</dbReference>
<dbReference type="SMART" id="SM00382">
    <property type="entry name" value="AAA"/>
    <property type="match status" value="1"/>
</dbReference>
<dbReference type="SUPFAM" id="SSF52540">
    <property type="entry name" value="P-loop containing nucleoside triphosphate hydrolases"/>
    <property type="match status" value="1"/>
</dbReference>
<dbReference type="SUPFAM" id="SSF46785">
    <property type="entry name" value="Winged helix' DNA-binding domain"/>
    <property type="match status" value="1"/>
</dbReference>
<sequence length="361" mass="40276">MHKDEDQRLLGAVPLPNDPDRSLRPQVLDDFIGQEAARANLKIFIEAAKARQEALDHVLFVGPPGLGKTTLSQIMAKELGVNFRSTSGPVIAKAGDLAALLTNLEERDVLFIDEIHRLSPAIEEILYPAMEDYQLDLIIGEGPAARSVKIDLAKFTLVAATTRLGLLTTPLRDRFGIPIRLNFYTIEELEYIVQRNARLFSVQISEDGAHEIARRARGTPRIAGRLLRRVCDFALVKRAKKIDRKIADEALSRLEVDHLGLDPLDRRYLLLIAQTFLGGPVGIETIAAALSEPRDAIEDIIEPYLLQQGFIQRTARGRILHQKAWSHLGLCAPASTQKHPQLFDMPDNASRQTVLWDEADD</sequence>
<evidence type="ECO:0000255" key="1">
    <source>
        <dbReference type="HAMAP-Rule" id="MF_00016"/>
    </source>
</evidence>
<evidence type="ECO:0000256" key="2">
    <source>
        <dbReference type="SAM" id="MobiDB-lite"/>
    </source>
</evidence>
<name>RUVB_BARHE</name>
<gene>
    <name evidence="1" type="primary">ruvB</name>
    <name type="ordered locus">BH14890</name>
</gene>
<comment type="function">
    <text evidence="1">The RuvA-RuvB-RuvC complex processes Holliday junction (HJ) DNA during genetic recombination and DNA repair, while the RuvA-RuvB complex plays an important role in the rescue of blocked DNA replication forks via replication fork reversal (RFR). RuvA specifically binds to HJ cruciform DNA, conferring on it an open structure. The RuvB hexamer acts as an ATP-dependent pump, pulling dsDNA into and through the RuvAB complex. RuvB forms 2 homohexamers on either side of HJ DNA bound by 1 or 2 RuvA tetramers; 4 subunits per hexamer contact DNA at a time. Coordinated motions by a converter formed by DNA-disengaged RuvB subunits stimulates ATP hydrolysis and nucleotide exchange. Immobilization of the converter enables RuvB to convert the ATP-contained energy into a lever motion, pulling 2 nucleotides of DNA out of the RuvA tetramer per ATP hydrolyzed, thus driving DNA branch migration. The RuvB motors rotate together with the DNA substrate, which together with the progressing nucleotide cycle form the mechanistic basis for DNA recombination by continuous HJ branch migration. Branch migration allows RuvC to scan DNA until it finds its consensus sequence, where it cleaves and resolves cruciform DNA.</text>
</comment>
<comment type="catalytic activity">
    <reaction evidence="1">
        <text>ATP + H2O = ADP + phosphate + H(+)</text>
        <dbReference type="Rhea" id="RHEA:13065"/>
        <dbReference type="ChEBI" id="CHEBI:15377"/>
        <dbReference type="ChEBI" id="CHEBI:15378"/>
        <dbReference type="ChEBI" id="CHEBI:30616"/>
        <dbReference type="ChEBI" id="CHEBI:43474"/>
        <dbReference type="ChEBI" id="CHEBI:456216"/>
    </reaction>
</comment>
<comment type="subunit">
    <text evidence="1">Homohexamer. Forms an RuvA(8)-RuvB(12)-Holliday junction (HJ) complex. HJ DNA is sandwiched between 2 RuvA tetramers; dsDNA enters through RuvA and exits via RuvB. An RuvB hexamer assembles on each DNA strand where it exits the tetramer. Each RuvB hexamer is contacted by two RuvA subunits (via domain III) on 2 adjacent RuvB subunits; this complex drives branch migration. In the full resolvosome a probable DNA-RuvA(4)-RuvB(12)-RuvC(2) complex forms which resolves the HJ.</text>
</comment>
<comment type="subcellular location">
    <subcellularLocation>
        <location evidence="1">Cytoplasm</location>
    </subcellularLocation>
</comment>
<comment type="domain">
    <text evidence="1">Has 3 domains, the large (RuvB-L) and small ATPase (RuvB-S) domains and the C-terminal head (RuvB-H) domain. The head domain binds DNA, while the ATPase domains jointly bind ATP, ADP or are empty depending on the state of the subunit in the translocation cycle. During a single DNA translocation step the structure of each domain remains the same, but their relative positions change.</text>
</comment>
<comment type="similarity">
    <text evidence="1">Belongs to the RuvB family.</text>
</comment>
<keyword id="KW-0067">ATP-binding</keyword>
<keyword id="KW-0963">Cytoplasm</keyword>
<keyword id="KW-0227">DNA damage</keyword>
<keyword id="KW-0233">DNA recombination</keyword>
<keyword id="KW-0234">DNA repair</keyword>
<keyword id="KW-0238">DNA-binding</keyword>
<keyword id="KW-0378">Hydrolase</keyword>
<keyword id="KW-0547">Nucleotide-binding</keyword>
<proteinExistence type="inferred from homology"/>
<feature type="chain" id="PRO_0000165495" description="Holliday junction branch migration complex subunit RuvB">
    <location>
        <begin position="1"/>
        <end position="361"/>
    </location>
</feature>
<feature type="region of interest" description="Large ATPase domain (RuvB-L)" evidence="1">
    <location>
        <begin position="1"/>
        <end position="184"/>
    </location>
</feature>
<feature type="region of interest" description="Disordered" evidence="2">
    <location>
        <begin position="1"/>
        <end position="21"/>
    </location>
</feature>
<feature type="region of interest" description="Small ATPAse domain (RuvB-S)" evidence="1">
    <location>
        <begin position="185"/>
        <end position="255"/>
    </location>
</feature>
<feature type="region of interest" description="Head domain (RuvB-H)" evidence="1">
    <location>
        <begin position="258"/>
        <end position="361"/>
    </location>
</feature>
<feature type="binding site" evidence="1">
    <location>
        <position position="23"/>
    </location>
    <ligand>
        <name>ATP</name>
        <dbReference type="ChEBI" id="CHEBI:30616"/>
    </ligand>
</feature>
<feature type="binding site" evidence="1">
    <location>
        <position position="24"/>
    </location>
    <ligand>
        <name>ATP</name>
        <dbReference type="ChEBI" id="CHEBI:30616"/>
    </ligand>
</feature>
<feature type="binding site" evidence="1">
    <location>
        <position position="65"/>
    </location>
    <ligand>
        <name>ATP</name>
        <dbReference type="ChEBI" id="CHEBI:30616"/>
    </ligand>
</feature>
<feature type="binding site" evidence="1">
    <location>
        <position position="68"/>
    </location>
    <ligand>
        <name>ATP</name>
        <dbReference type="ChEBI" id="CHEBI:30616"/>
    </ligand>
</feature>
<feature type="binding site" evidence="1">
    <location>
        <position position="69"/>
    </location>
    <ligand>
        <name>ATP</name>
        <dbReference type="ChEBI" id="CHEBI:30616"/>
    </ligand>
</feature>
<feature type="binding site" evidence="1">
    <location>
        <position position="69"/>
    </location>
    <ligand>
        <name>Mg(2+)</name>
        <dbReference type="ChEBI" id="CHEBI:18420"/>
    </ligand>
</feature>
<feature type="binding site" evidence="1">
    <location>
        <position position="70"/>
    </location>
    <ligand>
        <name>ATP</name>
        <dbReference type="ChEBI" id="CHEBI:30616"/>
    </ligand>
</feature>
<feature type="binding site" evidence="1">
    <location>
        <begin position="131"/>
        <end position="133"/>
    </location>
    <ligand>
        <name>ATP</name>
        <dbReference type="ChEBI" id="CHEBI:30616"/>
    </ligand>
</feature>
<feature type="binding site" evidence="1">
    <location>
        <position position="174"/>
    </location>
    <ligand>
        <name>ATP</name>
        <dbReference type="ChEBI" id="CHEBI:30616"/>
    </ligand>
</feature>
<feature type="binding site" evidence="1">
    <location>
        <position position="184"/>
    </location>
    <ligand>
        <name>ATP</name>
        <dbReference type="ChEBI" id="CHEBI:30616"/>
    </ligand>
</feature>
<feature type="binding site" evidence="1">
    <location>
        <position position="221"/>
    </location>
    <ligand>
        <name>ATP</name>
        <dbReference type="ChEBI" id="CHEBI:30616"/>
    </ligand>
</feature>
<feature type="binding site" evidence="1">
    <location>
        <position position="294"/>
    </location>
    <ligand>
        <name>DNA</name>
        <dbReference type="ChEBI" id="CHEBI:16991"/>
    </ligand>
</feature>
<feature type="binding site" evidence="1">
    <location>
        <position position="313"/>
    </location>
    <ligand>
        <name>DNA</name>
        <dbReference type="ChEBI" id="CHEBI:16991"/>
    </ligand>
</feature>
<feature type="binding site" evidence="1">
    <location>
        <position position="318"/>
    </location>
    <ligand>
        <name>DNA</name>
        <dbReference type="ChEBI" id="CHEBI:16991"/>
    </ligand>
</feature>
<organism>
    <name type="scientific">Bartonella henselae (strain ATCC 49882 / DSM 28221 / CCUG 30454 / Houston 1)</name>
    <name type="common">Rochalimaea henselae</name>
    <dbReference type="NCBI Taxonomy" id="283166"/>
    <lineage>
        <taxon>Bacteria</taxon>
        <taxon>Pseudomonadati</taxon>
        <taxon>Pseudomonadota</taxon>
        <taxon>Alphaproteobacteria</taxon>
        <taxon>Hyphomicrobiales</taxon>
        <taxon>Bartonellaceae</taxon>
        <taxon>Bartonella</taxon>
    </lineage>
</organism>